<accession>B1LWM1</accession>
<dbReference type="EMBL" id="CP001001">
    <property type="protein sequence ID" value="ACB22723.1"/>
    <property type="molecule type" value="Genomic_DNA"/>
</dbReference>
<dbReference type="RefSeq" id="WP_012317717.1">
    <property type="nucleotide sequence ID" value="NC_010505.1"/>
</dbReference>
<dbReference type="SMR" id="B1LWM1"/>
<dbReference type="STRING" id="426355.Mrad2831_0712"/>
<dbReference type="GeneID" id="6136727"/>
<dbReference type="KEGG" id="mrd:Mrad2831_0712"/>
<dbReference type="eggNOG" id="COG0711">
    <property type="taxonomic scope" value="Bacteria"/>
</dbReference>
<dbReference type="HOGENOM" id="CLU_079215_1_2_5"/>
<dbReference type="OrthoDB" id="9805716at2"/>
<dbReference type="Proteomes" id="UP000006589">
    <property type="component" value="Chromosome"/>
</dbReference>
<dbReference type="GO" id="GO:0005886">
    <property type="term" value="C:plasma membrane"/>
    <property type="evidence" value="ECO:0007669"/>
    <property type="project" value="UniProtKB-SubCell"/>
</dbReference>
<dbReference type="GO" id="GO:0045259">
    <property type="term" value="C:proton-transporting ATP synthase complex"/>
    <property type="evidence" value="ECO:0007669"/>
    <property type="project" value="UniProtKB-KW"/>
</dbReference>
<dbReference type="GO" id="GO:0046933">
    <property type="term" value="F:proton-transporting ATP synthase activity, rotational mechanism"/>
    <property type="evidence" value="ECO:0007669"/>
    <property type="project" value="UniProtKB-UniRule"/>
</dbReference>
<dbReference type="GO" id="GO:0046961">
    <property type="term" value="F:proton-transporting ATPase activity, rotational mechanism"/>
    <property type="evidence" value="ECO:0007669"/>
    <property type="project" value="TreeGrafter"/>
</dbReference>
<dbReference type="CDD" id="cd06503">
    <property type="entry name" value="ATP-synt_Fo_b"/>
    <property type="match status" value="1"/>
</dbReference>
<dbReference type="HAMAP" id="MF_01398">
    <property type="entry name" value="ATP_synth_b_bprime"/>
    <property type="match status" value="1"/>
</dbReference>
<dbReference type="InterPro" id="IPR002146">
    <property type="entry name" value="ATP_synth_b/b'su_bac/chlpt"/>
</dbReference>
<dbReference type="InterPro" id="IPR050059">
    <property type="entry name" value="ATP_synthase_B_chain"/>
</dbReference>
<dbReference type="PANTHER" id="PTHR33445:SF1">
    <property type="entry name" value="ATP SYNTHASE SUBUNIT B"/>
    <property type="match status" value="1"/>
</dbReference>
<dbReference type="PANTHER" id="PTHR33445">
    <property type="entry name" value="ATP SYNTHASE SUBUNIT B', CHLOROPLASTIC"/>
    <property type="match status" value="1"/>
</dbReference>
<dbReference type="Pfam" id="PF00430">
    <property type="entry name" value="ATP-synt_B"/>
    <property type="match status" value="1"/>
</dbReference>
<gene>
    <name type="primary">atpF2</name>
    <name type="synonym">atpG</name>
    <name type="ordered locus">Mrad2831_0712</name>
</gene>
<evidence type="ECO:0000250" key="1"/>
<evidence type="ECO:0000255" key="2"/>
<evidence type="ECO:0000305" key="3"/>
<reference key="1">
    <citation type="submission" date="2008-03" db="EMBL/GenBank/DDBJ databases">
        <title>Complete sequence of chromosome of Methylobacterium radiotolerans JCM 2831.</title>
        <authorList>
            <consortium name="US DOE Joint Genome Institute"/>
            <person name="Copeland A."/>
            <person name="Lucas S."/>
            <person name="Lapidus A."/>
            <person name="Glavina del Rio T."/>
            <person name="Dalin E."/>
            <person name="Tice H."/>
            <person name="Bruce D."/>
            <person name="Goodwin L."/>
            <person name="Pitluck S."/>
            <person name="Kiss H."/>
            <person name="Brettin T."/>
            <person name="Detter J.C."/>
            <person name="Han C."/>
            <person name="Kuske C.R."/>
            <person name="Schmutz J."/>
            <person name="Larimer F."/>
            <person name="Land M."/>
            <person name="Hauser L."/>
            <person name="Kyrpides N."/>
            <person name="Mikhailova N."/>
            <person name="Marx C.J."/>
            <person name="Richardson P."/>
        </authorList>
    </citation>
    <scope>NUCLEOTIDE SEQUENCE [LARGE SCALE GENOMIC DNA]</scope>
    <source>
        <strain>ATCC 27329 / DSM 1819 / JCM 2831 / NBRC 15690 / NCIMB 10815 / 0-1</strain>
    </source>
</reference>
<name>ATPF2_METRJ</name>
<keyword id="KW-0066">ATP synthesis</keyword>
<keyword id="KW-0997">Cell inner membrane</keyword>
<keyword id="KW-1003">Cell membrane</keyword>
<keyword id="KW-0138">CF(0)</keyword>
<keyword id="KW-0375">Hydrogen ion transport</keyword>
<keyword id="KW-0406">Ion transport</keyword>
<keyword id="KW-0472">Membrane</keyword>
<keyword id="KW-0812">Transmembrane</keyword>
<keyword id="KW-1133">Transmembrane helix</keyword>
<keyword id="KW-0813">Transport</keyword>
<sequence length="192" mass="20549">MAQPNPLTTPPPGADTQVVPGHVEHTEAHSGAFPPFETSGFLAQLIWLALAFGLLYYLMDKIALPRIQSILHARAERLRADLDQAQAMKAEADAAGVAFETALRDAQGKARDIAQTTRNELAAEAETKRKALEDELNAKLSASEATIRTRTEAAMGNVRTIAGEAASAIVERLTGQAPDRTSLDRALDATAH</sequence>
<protein>
    <recommendedName>
        <fullName>ATP synthase subunit b 2</fullName>
    </recommendedName>
    <alternativeName>
        <fullName>ATP synthase F(0) sector subunit b 2</fullName>
    </alternativeName>
    <alternativeName>
        <fullName>ATPase subunit I 2</fullName>
    </alternativeName>
    <alternativeName>
        <fullName>F-type ATPase subunit b 2</fullName>
        <shortName>F-ATPase subunit b 2</shortName>
    </alternativeName>
</protein>
<organism>
    <name type="scientific">Methylobacterium radiotolerans (strain ATCC 27329 / DSM 1819 / JCM 2831 / NBRC 15690 / NCIMB 10815 / 0-1)</name>
    <dbReference type="NCBI Taxonomy" id="426355"/>
    <lineage>
        <taxon>Bacteria</taxon>
        <taxon>Pseudomonadati</taxon>
        <taxon>Pseudomonadota</taxon>
        <taxon>Alphaproteobacteria</taxon>
        <taxon>Hyphomicrobiales</taxon>
        <taxon>Methylobacteriaceae</taxon>
        <taxon>Methylobacterium</taxon>
    </lineage>
</organism>
<feature type="chain" id="PRO_0000369013" description="ATP synthase subunit b 2">
    <location>
        <begin position="1"/>
        <end position="192"/>
    </location>
</feature>
<feature type="transmembrane region" description="Helical" evidence="2">
    <location>
        <begin position="39"/>
        <end position="59"/>
    </location>
</feature>
<proteinExistence type="inferred from homology"/>
<comment type="function">
    <text evidence="1">F(1)F(0) ATP synthase produces ATP from ADP in the presence of a proton or sodium gradient. F-type ATPases consist of two structural domains, F(1) containing the extramembraneous catalytic core and F(0) containing the membrane proton channel, linked together by a central stalk and a peripheral stalk. During catalysis, ATP synthesis in the catalytic domain of F(1) is coupled via a rotary mechanism of the central stalk subunits to proton translocation (By similarity).</text>
</comment>
<comment type="function">
    <text evidence="1">Component of the F(0) channel, it forms part of the peripheral stalk, linking F(1) to F(0). The b'-subunit is a diverged and duplicated form of b found in plants and photosynthetic bacteria (By similarity).</text>
</comment>
<comment type="subunit">
    <text evidence="1">F-type ATPases have 2 components, F(1) - the catalytic core - and F(0) - the membrane proton channel. F(1) has five subunits: alpha(3), beta(3), gamma(1), delta(1), epsilon(1). F(0) has three main subunits: a(1), b(2) and c(10-14). The alpha and beta chains form an alternating ring which encloses part of the gamma chain. F(1) is attached to F(0) by a central stalk formed by the gamma and epsilon chains, while a peripheral stalk is formed by the delta and b chains (By similarity).</text>
</comment>
<comment type="subcellular location">
    <subcellularLocation>
        <location evidence="1">Cell inner membrane</location>
        <topology evidence="1">Single-pass membrane protein</topology>
    </subcellularLocation>
</comment>
<comment type="similarity">
    <text evidence="3">Belongs to the ATPase B chain family.</text>
</comment>